<protein>
    <recommendedName>
        <fullName evidence="1">D-aminoacyl-tRNA deacylase</fullName>
        <shortName evidence="1">DTD</shortName>
        <ecNumber evidence="1">3.1.1.96</ecNumber>
    </recommendedName>
    <alternativeName>
        <fullName evidence="1">Gly-tRNA(Ala) deacylase</fullName>
    </alternativeName>
</protein>
<evidence type="ECO:0000255" key="1">
    <source>
        <dbReference type="HAMAP-Rule" id="MF_00518"/>
    </source>
</evidence>
<gene>
    <name evidence="1" type="primary">dtd</name>
    <name type="ordered locus">XCV3913</name>
</gene>
<feature type="chain" id="PRO_0000259329" description="D-aminoacyl-tRNA deacylase">
    <location>
        <begin position="1"/>
        <end position="146"/>
    </location>
</feature>
<feature type="short sequence motif" description="Gly-cisPro motif, important for rejection of L-amino acids" evidence="1">
    <location>
        <begin position="138"/>
        <end position="139"/>
    </location>
</feature>
<sequence>MLALIQRVTRAAVTVDDQIVGQIGPGLLALIGVEPGDSDAQIRRLAERLLSYRVFGDDAGKMNRSLTDTGGGLLLVSQFTLAADTSSGNRPGFSTAAPPLEAEPAFNQLVAICREKHRGGVEAGRFGAHMVVDLVNDGPVTFLLRP</sequence>
<reference key="1">
    <citation type="journal article" date="2005" name="J. Bacteriol.">
        <title>Insights into genome plasticity and pathogenicity of the plant pathogenic Bacterium Xanthomonas campestris pv. vesicatoria revealed by the complete genome sequence.</title>
        <authorList>
            <person name="Thieme F."/>
            <person name="Koebnik R."/>
            <person name="Bekel T."/>
            <person name="Berger C."/>
            <person name="Boch J."/>
            <person name="Buettner D."/>
            <person name="Caldana C."/>
            <person name="Gaigalat L."/>
            <person name="Goesmann A."/>
            <person name="Kay S."/>
            <person name="Kirchner O."/>
            <person name="Lanz C."/>
            <person name="Linke B."/>
            <person name="McHardy A.C."/>
            <person name="Meyer F."/>
            <person name="Mittenhuber G."/>
            <person name="Nies D.H."/>
            <person name="Niesbach-Kloesgen U."/>
            <person name="Patschkowski T."/>
            <person name="Rueckert C."/>
            <person name="Rupp O."/>
            <person name="Schneiker S."/>
            <person name="Schuster S.C."/>
            <person name="Vorhoelter F.J."/>
            <person name="Weber E."/>
            <person name="Puehler A."/>
            <person name="Bonas U."/>
            <person name="Bartels D."/>
            <person name="Kaiser O."/>
        </authorList>
    </citation>
    <scope>NUCLEOTIDE SEQUENCE [LARGE SCALE GENOMIC DNA]</scope>
    <source>
        <strain>85-10</strain>
    </source>
</reference>
<name>DTD_XANE5</name>
<accession>Q3BNL9</accession>
<dbReference type="EC" id="3.1.1.96" evidence="1"/>
<dbReference type="EMBL" id="AM039952">
    <property type="protein sequence ID" value="CAJ25644.1"/>
    <property type="molecule type" value="Genomic_DNA"/>
</dbReference>
<dbReference type="RefSeq" id="WP_011348770.1">
    <property type="nucleotide sequence ID" value="NZ_CP017190.1"/>
</dbReference>
<dbReference type="SMR" id="Q3BNL9"/>
<dbReference type="STRING" id="456327.BJD11_03075"/>
<dbReference type="KEGG" id="xcv:XCV3913"/>
<dbReference type="eggNOG" id="COG1490">
    <property type="taxonomic scope" value="Bacteria"/>
</dbReference>
<dbReference type="HOGENOM" id="CLU_076901_1_1_6"/>
<dbReference type="Proteomes" id="UP000007069">
    <property type="component" value="Chromosome"/>
</dbReference>
<dbReference type="GO" id="GO:0005737">
    <property type="term" value="C:cytoplasm"/>
    <property type="evidence" value="ECO:0007669"/>
    <property type="project" value="UniProtKB-SubCell"/>
</dbReference>
<dbReference type="GO" id="GO:0051500">
    <property type="term" value="F:D-tyrosyl-tRNA(Tyr) deacylase activity"/>
    <property type="evidence" value="ECO:0007669"/>
    <property type="project" value="TreeGrafter"/>
</dbReference>
<dbReference type="GO" id="GO:0106026">
    <property type="term" value="F:Gly-tRNA(Ala) deacylase activity"/>
    <property type="evidence" value="ECO:0007669"/>
    <property type="project" value="UniProtKB-UniRule"/>
</dbReference>
<dbReference type="GO" id="GO:0043908">
    <property type="term" value="F:Ser(Gly)-tRNA(Ala) hydrolase activity"/>
    <property type="evidence" value="ECO:0007669"/>
    <property type="project" value="UniProtKB-UniRule"/>
</dbReference>
<dbReference type="GO" id="GO:0000049">
    <property type="term" value="F:tRNA binding"/>
    <property type="evidence" value="ECO:0007669"/>
    <property type="project" value="UniProtKB-UniRule"/>
</dbReference>
<dbReference type="GO" id="GO:0019478">
    <property type="term" value="P:D-amino acid catabolic process"/>
    <property type="evidence" value="ECO:0007669"/>
    <property type="project" value="UniProtKB-UniRule"/>
</dbReference>
<dbReference type="FunFam" id="3.50.80.10:FF:000001">
    <property type="entry name" value="D-aminoacyl-tRNA deacylase"/>
    <property type="match status" value="1"/>
</dbReference>
<dbReference type="Gene3D" id="3.50.80.10">
    <property type="entry name" value="D-tyrosyl-tRNA(Tyr) deacylase"/>
    <property type="match status" value="1"/>
</dbReference>
<dbReference type="HAMAP" id="MF_00518">
    <property type="entry name" value="Deacylase_Dtd"/>
    <property type="match status" value="1"/>
</dbReference>
<dbReference type="InterPro" id="IPR003732">
    <property type="entry name" value="Daa-tRNA_deacyls_DTD"/>
</dbReference>
<dbReference type="InterPro" id="IPR023509">
    <property type="entry name" value="DTD-like_sf"/>
</dbReference>
<dbReference type="NCBIfam" id="TIGR00256">
    <property type="entry name" value="D-aminoacyl-tRNA deacylase"/>
    <property type="match status" value="1"/>
</dbReference>
<dbReference type="PANTHER" id="PTHR10472:SF5">
    <property type="entry name" value="D-AMINOACYL-TRNA DEACYLASE 1"/>
    <property type="match status" value="1"/>
</dbReference>
<dbReference type="PANTHER" id="PTHR10472">
    <property type="entry name" value="D-TYROSYL-TRNA TYR DEACYLASE"/>
    <property type="match status" value="1"/>
</dbReference>
<dbReference type="Pfam" id="PF02580">
    <property type="entry name" value="Tyr_Deacylase"/>
    <property type="match status" value="1"/>
</dbReference>
<dbReference type="SUPFAM" id="SSF69500">
    <property type="entry name" value="DTD-like"/>
    <property type="match status" value="1"/>
</dbReference>
<proteinExistence type="inferred from homology"/>
<comment type="function">
    <text evidence="1">An aminoacyl-tRNA editing enzyme that deacylates mischarged D-aminoacyl-tRNAs. Also deacylates mischarged glycyl-tRNA(Ala), protecting cells against glycine mischarging by AlaRS. Acts via tRNA-based rather than protein-based catalysis; rejects L-amino acids rather than detecting D-amino acids in the active site. By recycling D-aminoacyl-tRNA to D-amino acids and free tRNA molecules, this enzyme counteracts the toxicity associated with the formation of D-aminoacyl-tRNA entities in vivo and helps enforce protein L-homochirality.</text>
</comment>
<comment type="catalytic activity">
    <reaction evidence="1">
        <text>glycyl-tRNA(Ala) + H2O = tRNA(Ala) + glycine + H(+)</text>
        <dbReference type="Rhea" id="RHEA:53744"/>
        <dbReference type="Rhea" id="RHEA-COMP:9657"/>
        <dbReference type="Rhea" id="RHEA-COMP:13640"/>
        <dbReference type="ChEBI" id="CHEBI:15377"/>
        <dbReference type="ChEBI" id="CHEBI:15378"/>
        <dbReference type="ChEBI" id="CHEBI:57305"/>
        <dbReference type="ChEBI" id="CHEBI:78442"/>
        <dbReference type="ChEBI" id="CHEBI:78522"/>
        <dbReference type="EC" id="3.1.1.96"/>
    </reaction>
</comment>
<comment type="catalytic activity">
    <reaction evidence="1">
        <text>a D-aminoacyl-tRNA + H2O = a tRNA + a D-alpha-amino acid + H(+)</text>
        <dbReference type="Rhea" id="RHEA:13953"/>
        <dbReference type="Rhea" id="RHEA-COMP:10123"/>
        <dbReference type="Rhea" id="RHEA-COMP:10124"/>
        <dbReference type="ChEBI" id="CHEBI:15377"/>
        <dbReference type="ChEBI" id="CHEBI:15378"/>
        <dbReference type="ChEBI" id="CHEBI:59871"/>
        <dbReference type="ChEBI" id="CHEBI:78442"/>
        <dbReference type="ChEBI" id="CHEBI:79333"/>
        <dbReference type="EC" id="3.1.1.96"/>
    </reaction>
</comment>
<comment type="subunit">
    <text evidence="1">Homodimer.</text>
</comment>
<comment type="subcellular location">
    <subcellularLocation>
        <location evidence="1">Cytoplasm</location>
    </subcellularLocation>
</comment>
<comment type="domain">
    <text evidence="1">A Gly-cisPro motif from one monomer fits into the active site of the other monomer to allow specific chiral rejection of L-amino acids.</text>
</comment>
<comment type="similarity">
    <text evidence="1">Belongs to the DTD family.</text>
</comment>
<keyword id="KW-0963">Cytoplasm</keyword>
<keyword id="KW-0378">Hydrolase</keyword>
<keyword id="KW-0694">RNA-binding</keyword>
<keyword id="KW-0820">tRNA-binding</keyword>
<organism>
    <name type="scientific">Xanthomonas euvesicatoria pv. vesicatoria (strain 85-10)</name>
    <name type="common">Xanthomonas campestris pv. vesicatoria</name>
    <dbReference type="NCBI Taxonomy" id="316273"/>
    <lineage>
        <taxon>Bacteria</taxon>
        <taxon>Pseudomonadati</taxon>
        <taxon>Pseudomonadota</taxon>
        <taxon>Gammaproteobacteria</taxon>
        <taxon>Lysobacterales</taxon>
        <taxon>Lysobacteraceae</taxon>
        <taxon>Xanthomonas</taxon>
    </lineage>
</organism>